<dbReference type="EC" id="3.5.1.14"/>
<dbReference type="EMBL" id="AY580164">
    <property type="protein sequence ID" value="AAS90690.1"/>
    <property type="molecule type" value="mRNA"/>
</dbReference>
<dbReference type="EMBL" id="BC078930">
    <property type="protein sequence ID" value="AAH78930.1"/>
    <property type="molecule type" value="mRNA"/>
</dbReference>
<dbReference type="RefSeq" id="NP_001005383.1">
    <property type="nucleotide sequence ID" value="NM_001005383.1"/>
</dbReference>
<dbReference type="RefSeq" id="XP_006243777.1">
    <property type="nucleotide sequence ID" value="XM_006243715.3"/>
</dbReference>
<dbReference type="RefSeq" id="XP_006243778.1">
    <property type="nucleotide sequence ID" value="XM_006243716.3"/>
</dbReference>
<dbReference type="SMR" id="Q6AYS7"/>
<dbReference type="BioGRID" id="256778">
    <property type="interactions" value="1"/>
</dbReference>
<dbReference type="FunCoup" id="Q6AYS7">
    <property type="interactions" value="189"/>
</dbReference>
<dbReference type="IntAct" id="Q6AYS7">
    <property type="interactions" value="1"/>
</dbReference>
<dbReference type="STRING" id="10116.ENSRNOP00000015852"/>
<dbReference type="iPTMnet" id="Q6AYS7"/>
<dbReference type="PhosphoSitePlus" id="Q6AYS7"/>
<dbReference type="jPOST" id="Q6AYS7"/>
<dbReference type="PaxDb" id="10116-ENSRNOP00000015852"/>
<dbReference type="GeneID" id="300981"/>
<dbReference type="KEGG" id="rno:300981"/>
<dbReference type="AGR" id="RGD:2030"/>
<dbReference type="CTD" id="95"/>
<dbReference type="RGD" id="2030">
    <property type="gene designation" value="Acy1"/>
</dbReference>
<dbReference type="VEuPathDB" id="HostDB:ENSRNOG00000011189"/>
<dbReference type="eggNOG" id="KOG2275">
    <property type="taxonomic scope" value="Eukaryota"/>
</dbReference>
<dbReference type="HOGENOM" id="CLU_021802_5_0_1"/>
<dbReference type="InParanoid" id="Q6AYS7"/>
<dbReference type="TreeFam" id="TF313693"/>
<dbReference type="BRENDA" id="3.5.1.14">
    <property type="organism ID" value="5301"/>
</dbReference>
<dbReference type="Reactome" id="R-RNO-5423646">
    <property type="pathway name" value="Aflatoxin activation and detoxification"/>
</dbReference>
<dbReference type="Reactome" id="R-RNO-9753281">
    <property type="pathway name" value="Paracetamol ADME"/>
</dbReference>
<dbReference type="Proteomes" id="UP000002494">
    <property type="component" value="Chromosome 8"/>
</dbReference>
<dbReference type="Bgee" id="ENSRNOG00000011189">
    <property type="expression patterns" value="Expressed in adult mammalian kidney and 19 other cell types or tissues"/>
</dbReference>
<dbReference type="GO" id="GO:0005737">
    <property type="term" value="C:cytoplasm"/>
    <property type="evidence" value="ECO:0007669"/>
    <property type="project" value="UniProtKB-SubCell"/>
</dbReference>
<dbReference type="GO" id="GO:0070062">
    <property type="term" value="C:extracellular exosome"/>
    <property type="evidence" value="ECO:0000266"/>
    <property type="project" value="RGD"/>
</dbReference>
<dbReference type="GO" id="GO:0004046">
    <property type="term" value="F:aminoacylase activity"/>
    <property type="evidence" value="ECO:0000314"/>
    <property type="project" value="RGD"/>
</dbReference>
<dbReference type="GO" id="GO:0042802">
    <property type="term" value="F:identical protein binding"/>
    <property type="evidence" value="ECO:0000266"/>
    <property type="project" value="RGD"/>
</dbReference>
<dbReference type="GO" id="GO:0046872">
    <property type="term" value="F:metal ion binding"/>
    <property type="evidence" value="ECO:0007669"/>
    <property type="project" value="UniProtKB-KW"/>
</dbReference>
<dbReference type="GO" id="GO:0006520">
    <property type="term" value="P:amino acid metabolic process"/>
    <property type="evidence" value="ECO:0007669"/>
    <property type="project" value="InterPro"/>
</dbReference>
<dbReference type="GO" id="GO:0030163">
    <property type="term" value="P:protein catabolic process"/>
    <property type="evidence" value="ECO:0000304"/>
    <property type="project" value="RGD"/>
</dbReference>
<dbReference type="CDD" id="cd05646">
    <property type="entry name" value="M20_AcylaseI_like"/>
    <property type="match status" value="1"/>
</dbReference>
<dbReference type="FunFam" id="3.40.630.10:FF:000019">
    <property type="entry name" value="Aminoacylase 1"/>
    <property type="match status" value="1"/>
</dbReference>
<dbReference type="FunFam" id="1.10.150.900:FF:000001">
    <property type="entry name" value="Aminoacylase-1, putative"/>
    <property type="match status" value="1"/>
</dbReference>
<dbReference type="FunFam" id="3.30.70.360:FF:000005">
    <property type="entry name" value="Putative Aminoacylase-1"/>
    <property type="match status" value="1"/>
</dbReference>
<dbReference type="Gene3D" id="1.10.150.900">
    <property type="match status" value="1"/>
</dbReference>
<dbReference type="Gene3D" id="3.30.70.360">
    <property type="match status" value="1"/>
</dbReference>
<dbReference type="Gene3D" id="3.40.630.10">
    <property type="entry name" value="Zn peptidases"/>
    <property type="match status" value="1"/>
</dbReference>
<dbReference type="InterPro" id="IPR052083">
    <property type="entry name" value="Aminoacylase-1_M20A"/>
</dbReference>
<dbReference type="InterPro" id="IPR001261">
    <property type="entry name" value="ArgE/DapE_CS"/>
</dbReference>
<dbReference type="InterPro" id="IPR036264">
    <property type="entry name" value="Bact_exopeptidase_dim_dom"/>
</dbReference>
<dbReference type="InterPro" id="IPR010159">
    <property type="entry name" value="N-acyl_aa_amidohydrolase"/>
</dbReference>
<dbReference type="InterPro" id="IPR002933">
    <property type="entry name" value="Peptidase_M20"/>
</dbReference>
<dbReference type="InterPro" id="IPR011650">
    <property type="entry name" value="Peptidase_M20_dimer"/>
</dbReference>
<dbReference type="NCBIfam" id="TIGR01880">
    <property type="entry name" value="Ac-peptdase-euk"/>
    <property type="match status" value="1"/>
</dbReference>
<dbReference type="PANTHER" id="PTHR45892">
    <property type="entry name" value="AMINOACYLASE-1"/>
    <property type="match status" value="1"/>
</dbReference>
<dbReference type="PANTHER" id="PTHR45892:SF1">
    <property type="entry name" value="AMINOACYLASE-1"/>
    <property type="match status" value="1"/>
</dbReference>
<dbReference type="Pfam" id="PF07687">
    <property type="entry name" value="M20_dimer"/>
    <property type="match status" value="1"/>
</dbReference>
<dbReference type="Pfam" id="PF01546">
    <property type="entry name" value="Peptidase_M20"/>
    <property type="match status" value="1"/>
</dbReference>
<dbReference type="PIRSF" id="PIRSF036696">
    <property type="entry name" value="ACY-1"/>
    <property type="match status" value="1"/>
</dbReference>
<dbReference type="SUPFAM" id="SSF55031">
    <property type="entry name" value="Bacterial exopeptidase dimerisation domain"/>
    <property type="match status" value="1"/>
</dbReference>
<dbReference type="SUPFAM" id="SSF53187">
    <property type="entry name" value="Zn-dependent exopeptidases"/>
    <property type="match status" value="1"/>
</dbReference>
<dbReference type="PROSITE" id="PS00758">
    <property type="entry name" value="ARGE_DAPE_CPG2_1"/>
    <property type="match status" value="1"/>
</dbReference>
<dbReference type="PROSITE" id="PS00759">
    <property type="entry name" value="ARGE_DAPE_CPG2_2"/>
    <property type="match status" value="1"/>
</dbReference>
<organism>
    <name type="scientific">Rattus norvegicus</name>
    <name type="common">Rat</name>
    <dbReference type="NCBI Taxonomy" id="10116"/>
    <lineage>
        <taxon>Eukaryota</taxon>
        <taxon>Metazoa</taxon>
        <taxon>Chordata</taxon>
        <taxon>Craniata</taxon>
        <taxon>Vertebrata</taxon>
        <taxon>Euteleostomi</taxon>
        <taxon>Mammalia</taxon>
        <taxon>Eutheria</taxon>
        <taxon>Euarchontoglires</taxon>
        <taxon>Glires</taxon>
        <taxon>Rodentia</taxon>
        <taxon>Myomorpha</taxon>
        <taxon>Muroidea</taxon>
        <taxon>Muridae</taxon>
        <taxon>Murinae</taxon>
        <taxon>Rattus</taxon>
    </lineage>
</organism>
<keyword id="KW-0963">Cytoplasm</keyword>
<keyword id="KW-0903">Direct protein sequencing</keyword>
<keyword id="KW-0378">Hydrolase</keyword>
<keyword id="KW-0479">Metal-binding</keyword>
<keyword id="KW-0597">Phosphoprotein</keyword>
<keyword id="KW-1185">Reference proteome</keyword>
<keyword id="KW-0862">Zinc</keyword>
<protein>
    <recommendedName>
        <fullName>Aminoacylase-1A</fullName>
        <shortName>ACY-1A</shortName>
        <ecNumber>3.5.1.14</ecNumber>
    </recommendedName>
    <alternativeName>
        <fullName>ACY IA</fullName>
    </alternativeName>
    <alternativeName>
        <fullName>N-acyl-L-amino-acid amidohydrolase</fullName>
    </alternativeName>
</protein>
<accession>Q6AYS7</accession>
<accession>Q6PTT1</accession>
<gene>
    <name type="primary">Acy1a</name>
    <name type="synonym">Acy1</name>
</gene>
<feature type="chain" id="PRO_0000274009" description="Aminoacylase-1A">
    <location>
        <begin position="1"/>
        <end position="408"/>
    </location>
</feature>
<feature type="active site" evidence="1">
    <location>
        <position position="82"/>
    </location>
</feature>
<feature type="active site" description="Proton acceptor" evidence="1">
    <location>
        <position position="147"/>
    </location>
</feature>
<feature type="binding site" evidence="1">
    <location>
        <position position="80"/>
    </location>
    <ligand>
        <name>Zn(2+)</name>
        <dbReference type="ChEBI" id="CHEBI:29105"/>
        <label>1</label>
    </ligand>
</feature>
<feature type="binding site" evidence="1">
    <location>
        <position position="113"/>
    </location>
    <ligand>
        <name>Zn(2+)</name>
        <dbReference type="ChEBI" id="CHEBI:29105"/>
        <label>1</label>
    </ligand>
</feature>
<feature type="binding site" evidence="1">
    <location>
        <position position="113"/>
    </location>
    <ligand>
        <name>Zn(2+)</name>
        <dbReference type="ChEBI" id="CHEBI:29105"/>
        <label>2</label>
    </ligand>
</feature>
<feature type="binding site" evidence="1">
    <location>
        <position position="148"/>
    </location>
    <ligand>
        <name>Zn(2+)</name>
        <dbReference type="ChEBI" id="CHEBI:29105"/>
        <label>2</label>
    </ligand>
</feature>
<feature type="binding site" evidence="1">
    <location>
        <position position="175"/>
    </location>
    <ligand>
        <name>Zn(2+)</name>
        <dbReference type="ChEBI" id="CHEBI:29105"/>
        <label>1</label>
    </ligand>
</feature>
<feature type="binding site" evidence="1">
    <location>
        <position position="373"/>
    </location>
    <ligand>
        <name>Zn(2+)</name>
        <dbReference type="ChEBI" id="CHEBI:29105"/>
        <label>2</label>
    </ligand>
</feature>
<feature type="modified residue" description="Phosphoserine" evidence="3">
    <location>
        <position position="408"/>
    </location>
</feature>
<feature type="sequence conflict" description="In Ref. 1; AAS90690." evidence="2" ref="1">
    <original>TKGPES</original>
    <variation>SKVPEE</variation>
    <location>
        <begin position="3"/>
        <end position="8"/>
    </location>
</feature>
<feature type="sequence conflict" description="In Ref. 1; AAS90690." evidence="2" ref="1">
    <original>G</original>
    <variation>S</variation>
    <location>
        <position position="132"/>
    </location>
</feature>
<sequence length="408" mass="45804">MTTKGPESEHPSVTLFRQYLRICTVQPNPDYGSAVTFLEERARQLGLSCQKIEVAPGYVITVLTWPGTNPLLHSILLNSHTDVVPVFKEHWHHDPFEAFKDSEGYIYARGAQDMKSVSIQYLEAVRRLKSEGHRFPRTIHMTFVPDEEVGGHKGMELFVKRPEFQALRAGFALDEGLANPTDAFTVFYSERSPWWIRVTSTGKPGHASRFIEDTAAEKLHKVVNSILAFREKERQRLQANPHLKEGAVTSVNLTKLEGGVAYNVVPATMSACFDFRVAPDVDMKAFEKQLQSWCQEAGEGVTFEFAQKFTEPRMTPTDDTDPWWAAFSGACKEMNLTLEPEIFPAATDSRYIRAVGIPALGFSPMNRTPVLLHDHNERLHEAVFLRGVDIYTRLVAALASVPALPGES</sequence>
<name>ACY1A_RAT</name>
<evidence type="ECO:0000250" key="1"/>
<evidence type="ECO:0000305" key="2"/>
<evidence type="ECO:0007744" key="3">
    <source>
    </source>
</evidence>
<proteinExistence type="evidence at protein level"/>
<comment type="function">
    <text evidence="1">Involved in the hydrolysis of N-acylated or N-acetylated amino acids (except L-aspartate).</text>
</comment>
<comment type="catalytic activity">
    <reaction>
        <text>an N-acyl-L-amino acid + H2O = an L-alpha-amino acid + a carboxylate</text>
        <dbReference type="Rhea" id="RHEA:15565"/>
        <dbReference type="ChEBI" id="CHEBI:15377"/>
        <dbReference type="ChEBI" id="CHEBI:29067"/>
        <dbReference type="ChEBI" id="CHEBI:59869"/>
        <dbReference type="ChEBI" id="CHEBI:59874"/>
        <dbReference type="EC" id="3.5.1.14"/>
    </reaction>
</comment>
<comment type="catalytic activity">
    <reaction>
        <text>an N-acetyl-L-cysteine-S-conjugate + H2O = an S-substituted L-cysteine + acetate</text>
        <dbReference type="Rhea" id="RHEA:36855"/>
        <dbReference type="ChEBI" id="CHEBI:15377"/>
        <dbReference type="ChEBI" id="CHEBI:30089"/>
        <dbReference type="ChEBI" id="CHEBI:58717"/>
        <dbReference type="ChEBI" id="CHEBI:58718"/>
        <dbReference type="EC" id="3.5.1.14"/>
    </reaction>
</comment>
<comment type="cofactor">
    <cofactor evidence="1">
        <name>Zn(2+)</name>
        <dbReference type="ChEBI" id="CHEBI:29105"/>
    </cofactor>
    <text evidence="1">Binds 2 Zn(2+) ions per subunit.</text>
</comment>
<comment type="subunit">
    <text evidence="1">Homodimer.</text>
</comment>
<comment type="subcellular location">
    <subcellularLocation>
        <location evidence="1">Cytoplasm</location>
    </subcellularLocation>
</comment>
<comment type="PTM">
    <text>The N-terminus is blocked.</text>
</comment>
<comment type="similarity">
    <text evidence="2">Belongs to the peptidase M20A family.</text>
</comment>
<reference key="1">
    <citation type="journal article" date="2004" name="Comp. Biochem. Physiol.">
        <title>The rat kidney acylase 1. Evidence for a new cDNA form and comparisons with the porcine intestinal enzyme.</title>
        <authorList>
            <person name="Perrier J."/>
            <person name="Durand A."/>
            <person name="Giardina T."/>
            <person name="Puigserver A."/>
        </authorList>
    </citation>
    <scope>NUCLEOTIDE SEQUENCE [MRNA]</scope>
    <source>
        <strain>Wistar</strain>
    </source>
</reference>
<reference key="2">
    <citation type="journal article" date="2004" name="Genome Res.">
        <title>The status, quality, and expansion of the NIH full-length cDNA project: the Mammalian Gene Collection (MGC).</title>
        <authorList>
            <consortium name="The MGC Project Team"/>
        </authorList>
    </citation>
    <scope>NUCLEOTIDE SEQUENCE [LARGE SCALE MRNA]</scope>
    <source>
        <tissue>Kidney</tissue>
    </source>
</reference>
<reference key="3">
    <citation type="submission" date="2006-11" db="UniProtKB">
        <authorList>
            <person name="Lubec G."/>
            <person name="Afjehi-Sadat L."/>
        </authorList>
    </citation>
    <scope>PROTEIN SEQUENCE OF 89-100; 116-126; 169-190 AND 368-378</scope>
    <scope>IDENTIFICATION BY MASS SPECTROMETRY</scope>
    <source>
        <strain>Sprague-Dawley</strain>
        <tissue>Spinal cord</tissue>
    </source>
</reference>
<reference key="4">
    <citation type="journal article" date="2012" name="Nat. Commun.">
        <title>Quantitative maps of protein phosphorylation sites across 14 different rat organs and tissues.</title>
        <authorList>
            <person name="Lundby A."/>
            <person name="Secher A."/>
            <person name="Lage K."/>
            <person name="Nordsborg N.B."/>
            <person name="Dmytriyev A."/>
            <person name="Lundby C."/>
            <person name="Olsen J.V."/>
        </authorList>
    </citation>
    <scope>PHOSPHORYLATION [LARGE SCALE ANALYSIS] AT SER-408</scope>
    <scope>IDENTIFICATION BY MASS SPECTROMETRY [LARGE SCALE ANALYSIS]</scope>
</reference>